<accession>A2C472</accession>
<feature type="chain" id="PRO_1000030479" description="D-alanine--D-alanine ligase">
    <location>
        <begin position="1"/>
        <end position="348"/>
    </location>
</feature>
<feature type="domain" description="ATP-grasp" evidence="2">
    <location>
        <begin position="136"/>
        <end position="344"/>
    </location>
</feature>
<feature type="binding site" evidence="2">
    <location>
        <begin position="171"/>
        <end position="226"/>
    </location>
    <ligand>
        <name>ATP</name>
        <dbReference type="ChEBI" id="CHEBI:30616"/>
    </ligand>
</feature>
<feature type="binding site" evidence="2">
    <location>
        <position position="297"/>
    </location>
    <ligand>
        <name>Mg(2+)</name>
        <dbReference type="ChEBI" id="CHEBI:18420"/>
        <label>1</label>
    </ligand>
</feature>
<feature type="binding site" evidence="2">
    <location>
        <position position="311"/>
    </location>
    <ligand>
        <name>Mg(2+)</name>
        <dbReference type="ChEBI" id="CHEBI:18420"/>
        <label>1</label>
    </ligand>
</feature>
<feature type="binding site" evidence="2">
    <location>
        <position position="311"/>
    </location>
    <ligand>
        <name>Mg(2+)</name>
        <dbReference type="ChEBI" id="CHEBI:18420"/>
        <label>2</label>
    </ligand>
</feature>
<feature type="binding site" evidence="2">
    <location>
        <position position="313"/>
    </location>
    <ligand>
        <name>Mg(2+)</name>
        <dbReference type="ChEBI" id="CHEBI:18420"/>
        <label>2</label>
    </ligand>
</feature>
<comment type="function">
    <text evidence="2">Cell wall formation.</text>
</comment>
<comment type="catalytic activity">
    <reaction evidence="2">
        <text>2 D-alanine + ATP = D-alanyl-D-alanine + ADP + phosphate + H(+)</text>
        <dbReference type="Rhea" id="RHEA:11224"/>
        <dbReference type="ChEBI" id="CHEBI:15378"/>
        <dbReference type="ChEBI" id="CHEBI:30616"/>
        <dbReference type="ChEBI" id="CHEBI:43474"/>
        <dbReference type="ChEBI" id="CHEBI:57416"/>
        <dbReference type="ChEBI" id="CHEBI:57822"/>
        <dbReference type="ChEBI" id="CHEBI:456216"/>
        <dbReference type="EC" id="6.3.2.4"/>
    </reaction>
</comment>
<comment type="cofactor">
    <cofactor evidence="1">
        <name>Mg(2+)</name>
        <dbReference type="ChEBI" id="CHEBI:18420"/>
    </cofactor>
    <cofactor evidence="1">
        <name>Mn(2+)</name>
        <dbReference type="ChEBI" id="CHEBI:29035"/>
    </cofactor>
    <text evidence="1">Binds 2 magnesium or manganese ions per subunit.</text>
</comment>
<comment type="pathway">
    <text evidence="2">Cell wall biogenesis; peptidoglycan biosynthesis.</text>
</comment>
<comment type="subcellular location">
    <subcellularLocation>
        <location evidence="2">Cytoplasm</location>
    </subcellularLocation>
</comment>
<comment type="similarity">
    <text evidence="2">Belongs to the D-alanine--D-alanine ligase family.</text>
</comment>
<reference key="1">
    <citation type="journal article" date="2007" name="PLoS Genet.">
        <title>Patterns and implications of gene gain and loss in the evolution of Prochlorococcus.</title>
        <authorList>
            <person name="Kettler G.C."/>
            <person name="Martiny A.C."/>
            <person name="Huang K."/>
            <person name="Zucker J."/>
            <person name="Coleman M.L."/>
            <person name="Rodrigue S."/>
            <person name="Chen F."/>
            <person name="Lapidus A."/>
            <person name="Ferriera S."/>
            <person name="Johnson J."/>
            <person name="Steglich C."/>
            <person name="Church G.M."/>
            <person name="Richardson P."/>
            <person name="Chisholm S.W."/>
        </authorList>
    </citation>
    <scope>NUCLEOTIDE SEQUENCE [LARGE SCALE GENOMIC DNA]</scope>
    <source>
        <strain>NATL1A</strain>
    </source>
</reference>
<keyword id="KW-0067">ATP-binding</keyword>
<keyword id="KW-0133">Cell shape</keyword>
<keyword id="KW-0961">Cell wall biogenesis/degradation</keyword>
<keyword id="KW-0963">Cytoplasm</keyword>
<keyword id="KW-0436">Ligase</keyword>
<keyword id="KW-0460">Magnesium</keyword>
<keyword id="KW-0464">Manganese</keyword>
<keyword id="KW-0479">Metal-binding</keyword>
<keyword id="KW-0547">Nucleotide-binding</keyword>
<keyword id="KW-0573">Peptidoglycan synthesis</keyword>
<dbReference type="EC" id="6.3.2.4" evidence="2"/>
<dbReference type="EMBL" id="CP000553">
    <property type="protein sequence ID" value="ABM76282.1"/>
    <property type="molecule type" value="Genomic_DNA"/>
</dbReference>
<dbReference type="RefSeq" id="WP_011824283.1">
    <property type="nucleotide sequence ID" value="NC_008819.1"/>
</dbReference>
<dbReference type="SMR" id="A2C472"/>
<dbReference type="KEGG" id="pme:NATL1_17261"/>
<dbReference type="eggNOG" id="COG1181">
    <property type="taxonomic scope" value="Bacteria"/>
</dbReference>
<dbReference type="HOGENOM" id="CLU_039268_0_0_3"/>
<dbReference type="UniPathway" id="UPA00219"/>
<dbReference type="Proteomes" id="UP000002592">
    <property type="component" value="Chromosome"/>
</dbReference>
<dbReference type="GO" id="GO:0005829">
    <property type="term" value="C:cytosol"/>
    <property type="evidence" value="ECO:0007669"/>
    <property type="project" value="TreeGrafter"/>
</dbReference>
<dbReference type="GO" id="GO:0005524">
    <property type="term" value="F:ATP binding"/>
    <property type="evidence" value="ECO:0007669"/>
    <property type="project" value="UniProtKB-KW"/>
</dbReference>
<dbReference type="GO" id="GO:0008716">
    <property type="term" value="F:D-alanine-D-alanine ligase activity"/>
    <property type="evidence" value="ECO:0007669"/>
    <property type="project" value="UniProtKB-UniRule"/>
</dbReference>
<dbReference type="GO" id="GO:0046872">
    <property type="term" value="F:metal ion binding"/>
    <property type="evidence" value="ECO:0007669"/>
    <property type="project" value="UniProtKB-KW"/>
</dbReference>
<dbReference type="GO" id="GO:0071555">
    <property type="term" value="P:cell wall organization"/>
    <property type="evidence" value="ECO:0007669"/>
    <property type="project" value="UniProtKB-KW"/>
</dbReference>
<dbReference type="GO" id="GO:0009252">
    <property type="term" value="P:peptidoglycan biosynthetic process"/>
    <property type="evidence" value="ECO:0007669"/>
    <property type="project" value="UniProtKB-UniRule"/>
</dbReference>
<dbReference type="GO" id="GO:0008360">
    <property type="term" value="P:regulation of cell shape"/>
    <property type="evidence" value="ECO:0007669"/>
    <property type="project" value="UniProtKB-KW"/>
</dbReference>
<dbReference type="FunFam" id="3.30.1490.20:FF:000007">
    <property type="entry name" value="D-alanine--D-alanine ligase"/>
    <property type="match status" value="1"/>
</dbReference>
<dbReference type="FunFam" id="3.30.470.20:FF:000008">
    <property type="entry name" value="D-alanine--D-alanine ligase"/>
    <property type="match status" value="1"/>
</dbReference>
<dbReference type="Gene3D" id="3.40.50.20">
    <property type="match status" value="1"/>
</dbReference>
<dbReference type="Gene3D" id="3.30.1490.20">
    <property type="entry name" value="ATP-grasp fold, A domain"/>
    <property type="match status" value="1"/>
</dbReference>
<dbReference type="Gene3D" id="3.30.470.20">
    <property type="entry name" value="ATP-grasp fold, B domain"/>
    <property type="match status" value="1"/>
</dbReference>
<dbReference type="HAMAP" id="MF_00047">
    <property type="entry name" value="Dala_Dala_lig"/>
    <property type="match status" value="1"/>
</dbReference>
<dbReference type="InterPro" id="IPR011761">
    <property type="entry name" value="ATP-grasp"/>
</dbReference>
<dbReference type="InterPro" id="IPR013815">
    <property type="entry name" value="ATP_grasp_subdomain_1"/>
</dbReference>
<dbReference type="InterPro" id="IPR000291">
    <property type="entry name" value="D-Ala_lig_Van_CS"/>
</dbReference>
<dbReference type="InterPro" id="IPR005905">
    <property type="entry name" value="D_ala_D_ala"/>
</dbReference>
<dbReference type="InterPro" id="IPR011095">
    <property type="entry name" value="Dala_Dala_lig_C"/>
</dbReference>
<dbReference type="InterPro" id="IPR011127">
    <property type="entry name" value="Dala_Dala_lig_N"/>
</dbReference>
<dbReference type="InterPro" id="IPR016185">
    <property type="entry name" value="PreATP-grasp_dom_sf"/>
</dbReference>
<dbReference type="NCBIfam" id="TIGR01205">
    <property type="entry name" value="D_ala_D_alaTIGR"/>
    <property type="match status" value="1"/>
</dbReference>
<dbReference type="NCBIfam" id="NF002528">
    <property type="entry name" value="PRK01966.1-4"/>
    <property type="match status" value="1"/>
</dbReference>
<dbReference type="PANTHER" id="PTHR23132">
    <property type="entry name" value="D-ALANINE--D-ALANINE LIGASE"/>
    <property type="match status" value="1"/>
</dbReference>
<dbReference type="PANTHER" id="PTHR23132:SF25">
    <property type="entry name" value="D-ALANINE--D-ALANINE LIGASE A"/>
    <property type="match status" value="1"/>
</dbReference>
<dbReference type="Pfam" id="PF07478">
    <property type="entry name" value="Dala_Dala_lig_C"/>
    <property type="match status" value="1"/>
</dbReference>
<dbReference type="Pfam" id="PF01820">
    <property type="entry name" value="Dala_Dala_lig_N"/>
    <property type="match status" value="1"/>
</dbReference>
<dbReference type="PIRSF" id="PIRSF039102">
    <property type="entry name" value="Ddl/VanB"/>
    <property type="match status" value="1"/>
</dbReference>
<dbReference type="SUPFAM" id="SSF56059">
    <property type="entry name" value="Glutathione synthetase ATP-binding domain-like"/>
    <property type="match status" value="1"/>
</dbReference>
<dbReference type="SUPFAM" id="SSF52440">
    <property type="entry name" value="PreATP-grasp domain"/>
    <property type="match status" value="1"/>
</dbReference>
<dbReference type="PROSITE" id="PS50975">
    <property type="entry name" value="ATP_GRASP"/>
    <property type="match status" value="1"/>
</dbReference>
<dbReference type="PROSITE" id="PS00843">
    <property type="entry name" value="DALA_DALA_LIGASE_1"/>
    <property type="match status" value="1"/>
</dbReference>
<dbReference type="PROSITE" id="PS00844">
    <property type="entry name" value="DALA_DALA_LIGASE_2"/>
    <property type="match status" value="1"/>
</dbReference>
<evidence type="ECO:0000250" key="1"/>
<evidence type="ECO:0000255" key="2">
    <source>
        <dbReference type="HAMAP-Rule" id="MF_00047"/>
    </source>
</evidence>
<proteinExistence type="inferred from homology"/>
<gene>
    <name evidence="2" type="primary">ddl</name>
    <name type="ordered locus">NATL1_17261</name>
</gene>
<protein>
    <recommendedName>
        <fullName evidence="2">D-alanine--D-alanine ligase</fullName>
        <ecNumber evidence="2">6.3.2.4</ecNumber>
    </recommendedName>
    <alternativeName>
        <fullName evidence="2">D-Ala-D-Ala ligase</fullName>
    </alternativeName>
    <alternativeName>
        <fullName evidence="2">D-alanylalanine synthetase</fullName>
    </alternativeName>
</protein>
<name>DDL_PROM1</name>
<sequence>MFSNKPVIGVVFGGKSSEHEVSIKSAKTIYNALSHLSNKERYVARPVYIDKYGYWHDYIFSESILYDKKDHLIFEDRRVNLTNLSNMEDIDVWFPCLHGPNGEDGVIQGLFKSTGKPFVGSGVLGSALGMDKIAMKSVFKSYNLPQVPYVSLNKADIQNNLYMKSIYEQINKIINYPCFIKPANLGSSVGITKAYSKEEFITGIEFAAKYDERIIVEKSIEGRELECGVLGKSIMKSSVVGEVKFQTDWYTYESKYNANLSSTIIPADLNIEISNKIQKLAIEACKAINAYGLARVDFFYQESTQQIYINEVNTLPGFTKTSMYPTLWEASGLKLEKLVASLIEIAKE</sequence>
<organism>
    <name type="scientific">Prochlorococcus marinus (strain NATL1A)</name>
    <dbReference type="NCBI Taxonomy" id="167555"/>
    <lineage>
        <taxon>Bacteria</taxon>
        <taxon>Bacillati</taxon>
        <taxon>Cyanobacteriota</taxon>
        <taxon>Cyanophyceae</taxon>
        <taxon>Synechococcales</taxon>
        <taxon>Prochlorococcaceae</taxon>
        <taxon>Prochlorococcus</taxon>
    </lineage>
</organism>